<proteinExistence type="inferred from homology"/>
<protein>
    <recommendedName>
        <fullName evidence="1">Large ribosomal subunit protein bL32</fullName>
    </recommendedName>
    <alternativeName>
        <fullName evidence="2">50S ribosomal protein L32</fullName>
    </alternativeName>
</protein>
<sequence length="60" mass="6772">MAVPARRTSKAKKNKRRTHYKVTAPSVNFDETTGDYSRSHRVSLKGYYKGRKIAKAASAE</sequence>
<dbReference type="EMBL" id="CP000920">
    <property type="protein sequence ID" value="ACO21597.1"/>
    <property type="molecule type" value="Genomic_DNA"/>
</dbReference>
<dbReference type="RefSeq" id="WP_000290417.1">
    <property type="nucleotide sequence ID" value="NC_012467.1"/>
</dbReference>
<dbReference type="SMR" id="C1CNB3"/>
<dbReference type="GeneID" id="49598937"/>
<dbReference type="KEGG" id="spp:SPP_2190"/>
<dbReference type="HOGENOM" id="CLU_129084_2_3_9"/>
<dbReference type="GO" id="GO:0015934">
    <property type="term" value="C:large ribosomal subunit"/>
    <property type="evidence" value="ECO:0007669"/>
    <property type="project" value="InterPro"/>
</dbReference>
<dbReference type="GO" id="GO:0003735">
    <property type="term" value="F:structural constituent of ribosome"/>
    <property type="evidence" value="ECO:0007669"/>
    <property type="project" value="InterPro"/>
</dbReference>
<dbReference type="GO" id="GO:0006412">
    <property type="term" value="P:translation"/>
    <property type="evidence" value="ECO:0007669"/>
    <property type="project" value="UniProtKB-UniRule"/>
</dbReference>
<dbReference type="HAMAP" id="MF_00340">
    <property type="entry name" value="Ribosomal_bL32"/>
    <property type="match status" value="1"/>
</dbReference>
<dbReference type="InterPro" id="IPR002677">
    <property type="entry name" value="Ribosomal_bL32"/>
</dbReference>
<dbReference type="InterPro" id="IPR044957">
    <property type="entry name" value="Ribosomal_bL32_bact"/>
</dbReference>
<dbReference type="InterPro" id="IPR011332">
    <property type="entry name" value="Ribosomal_zn-bd"/>
</dbReference>
<dbReference type="NCBIfam" id="TIGR01031">
    <property type="entry name" value="rpmF_bact"/>
    <property type="match status" value="1"/>
</dbReference>
<dbReference type="PANTHER" id="PTHR35534">
    <property type="entry name" value="50S RIBOSOMAL PROTEIN L32"/>
    <property type="match status" value="1"/>
</dbReference>
<dbReference type="PANTHER" id="PTHR35534:SF1">
    <property type="entry name" value="LARGE RIBOSOMAL SUBUNIT PROTEIN BL32"/>
    <property type="match status" value="1"/>
</dbReference>
<dbReference type="Pfam" id="PF01783">
    <property type="entry name" value="Ribosomal_L32p"/>
    <property type="match status" value="1"/>
</dbReference>
<dbReference type="SUPFAM" id="SSF57829">
    <property type="entry name" value="Zn-binding ribosomal proteins"/>
    <property type="match status" value="1"/>
</dbReference>
<comment type="similarity">
    <text evidence="1">Belongs to the bacterial ribosomal protein bL32 family.</text>
</comment>
<reference key="1">
    <citation type="journal article" date="2010" name="Genome Biol.">
        <title>Structure and dynamics of the pan-genome of Streptococcus pneumoniae and closely related species.</title>
        <authorList>
            <person name="Donati C."/>
            <person name="Hiller N.L."/>
            <person name="Tettelin H."/>
            <person name="Muzzi A."/>
            <person name="Croucher N.J."/>
            <person name="Angiuoli S.V."/>
            <person name="Oggioni M."/>
            <person name="Dunning Hotopp J.C."/>
            <person name="Hu F.Z."/>
            <person name="Riley D.R."/>
            <person name="Covacci A."/>
            <person name="Mitchell T.J."/>
            <person name="Bentley S.D."/>
            <person name="Kilian M."/>
            <person name="Ehrlich G.D."/>
            <person name="Rappuoli R."/>
            <person name="Moxon E.R."/>
            <person name="Masignani V."/>
        </authorList>
    </citation>
    <scope>NUCLEOTIDE SEQUENCE [LARGE SCALE GENOMIC DNA]</scope>
    <source>
        <strain>P1031</strain>
    </source>
</reference>
<feature type="chain" id="PRO_1000195998" description="Large ribosomal subunit protein bL32">
    <location>
        <begin position="1"/>
        <end position="60"/>
    </location>
</feature>
<organism>
    <name type="scientific">Streptococcus pneumoniae (strain P1031)</name>
    <dbReference type="NCBI Taxonomy" id="488223"/>
    <lineage>
        <taxon>Bacteria</taxon>
        <taxon>Bacillati</taxon>
        <taxon>Bacillota</taxon>
        <taxon>Bacilli</taxon>
        <taxon>Lactobacillales</taxon>
        <taxon>Streptococcaceae</taxon>
        <taxon>Streptococcus</taxon>
    </lineage>
</organism>
<keyword id="KW-0687">Ribonucleoprotein</keyword>
<keyword id="KW-0689">Ribosomal protein</keyword>
<name>RL32_STRZP</name>
<evidence type="ECO:0000255" key="1">
    <source>
        <dbReference type="HAMAP-Rule" id="MF_00340"/>
    </source>
</evidence>
<evidence type="ECO:0000305" key="2"/>
<accession>C1CNB3</accession>
<gene>
    <name evidence="1" type="primary">rpmF</name>
    <name type="ordered locus">SPP_2190</name>
</gene>